<gene>
    <name type="primary">CDKB1-1</name>
    <name type="synonym">CDC2B</name>
    <name type="ordered locus">At3g54180</name>
    <name type="ORF">F24B22.140</name>
</gene>
<dbReference type="EC" id="2.7.11.22"/>
<dbReference type="EC" id="2.7.11.23"/>
<dbReference type="EMBL" id="D10851">
    <property type="protein sequence ID" value="BAA01624.1"/>
    <property type="molecule type" value="Genomic_DNA"/>
</dbReference>
<dbReference type="EMBL" id="AL132957">
    <property type="protein sequence ID" value="CAB70992.1"/>
    <property type="molecule type" value="Genomic_DNA"/>
</dbReference>
<dbReference type="EMBL" id="CP002686">
    <property type="protein sequence ID" value="AEE79196.1"/>
    <property type="molecule type" value="Genomic_DNA"/>
</dbReference>
<dbReference type="EMBL" id="BT026079">
    <property type="protein sequence ID" value="ABG48435.1"/>
    <property type="molecule type" value="mRNA"/>
</dbReference>
<dbReference type="EMBL" id="AY084810">
    <property type="protein sequence ID" value="AAM61376.1"/>
    <property type="molecule type" value="mRNA"/>
</dbReference>
<dbReference type="EMBL" id="X57840">
    <property type="protein sequence ID" value="CAA40972.1"/>
    <property type="molecule type" value="mRNA"/>
</dbReference>
<dbReference type="PIR" id="S23096">
    <property type="entry name" value="S23096"/>
</dbReference>
<dbReference type="RefSeq" id="NP_190986.1">
    <property type="nucleotide sequence ID" value="NM_115278.3"/>
</dbReference>
<dbReference type="SMR" id="P25859"/>
<dbReference type="BioGRID" id="9902">
    <property type="interactions" value="50"/>
</dbReference>
<dbReference type="FunCoup" id="P25859">
    <property type="interactions" value="604"/>
</dbReference>
<dbReference type="IntAct" id="P25859">
    <property type="interactions" value="25"/>
</dbReference>
<dbReference type="STRING" id="3702.P25859"/>
<dbReference type="iPTMnet" id="P25859"/>
<dbReference type="PaxDb" id="3702-AT3G54180.1"/>
<dbReference type="ProteomicsDB" id="246700"/>
<dbReference type="EnsemblPlants" id="AT3G54180.1">
    <property type="protein sequence ID" value="AT3G54180.1"/>
    <property type="gene ID" value="AT3G54180"/>
</dbReference>
<dbReference type="GeneID" id="824585"/>
<dbReference type="Gramene" id="AT3G54180.1">
    <property type="protein sequence ID" value="AT3G54180.1"/>
    <property type="gene ID" value="AT3G54180"/>
</dbReference>
<dbReference type="KEGG" id="ath:AT3G54180"/>
<dbReference type="Araport" id="AT3G54180"/>
<dbReference type="TAIR" id="AT3G54180">
    <property type="gene designation" value="CDKB1"/>
</dbReference>
<dbReference type="eggNOG" id="KOG0594">
    <property type="taxonomic scope" value="Eukaryota"/>
</dbReference>
<dbReference type="HOGENOM" id="CLU_000288_181_6_1"/>
<dbReference type="InParanoid" id="P25859"/>
<dbReference type="OMA" id="MYTGSAL"/>
<dbReference type="OrthoDB" id="1732493at2759"/>
<dbReference type="PhylomeDB" id="P25859"/>
<dbReference type="BRENDA" id="2.7.11.22">
    <property type="organism ID" value="399"/>
</dbReference>
<dbReference type="PRO" id="PR:P25859"/>
<dbReference type="Proteomes" id="UP000006548">
    <property type="component" value="Chromosome 3"/>
</dbReference>
<dbReference type="ExpressionAtlas" id="P25859">
    <property type="expression patterns" value="baseline and differential"/>
</dbReference>
<dbReference type="GO" id="GO:0005737">
    <property type="term" value="C:cytoplasm"/>
    <property type="evidence" value="ECO:0000314"/>
    <property type="project" value="TAIR"/>
</dbReference>
<dbReference type="GO" id="GO:0005634">
    <property type="term" value="C:nucleus"/>
    <property type="evidence" value="ECO:0000314"/>
    <property type="project" value="UniProtKB"/>
</dbReference>
<dbReference type="GO" id="GO:0005524">
    <property type="term" value="F:ATP binding"/>
    <property type="evidence" value="ECO:0007669"/>
    <property type="project" value="UniProtKB-KW"/>
</dbReference>
<dbReference type="GO" id="GO:0004693">
    <property type="term" value="F:cyclin-dependent protein serine/threonine kinase activity"/>
    <property type="evidence" value="ECO:0000250"/>
    <property type="project" value="TAIR"/>
</dbReference>
<dbReference type="GO" id="GO:0106310">
    <property type="term" value="F:protein serine kinase activity"/>
    <property type="evidence" value="ECO:0007669"/>
    <property type="project" value="RHEA"/>
</dbReference>
<dbReference type="GO" id="GO:0008353">
    <property type="term" value="F:RNA polymerase II CTD heptapeptide repeat kinase activity"/>
    <property type="evidence" value="ECO:0007669"/>
    <property type="project" value="UniProtKB-EC"/>
</dbReference>
<dbReference type="GO" id="GO:0051301">
    <property type="term" value="P:cell division"/>
    <property type="evidence" value="ECO:0007669"/>
    <property type="project" value="UniProtKB-KW"/>
</dbReference>
<dbReference type="GO" id="GO:0048825">
    <property type="term" value="P:cotyledon development"/>
    <property type="evidence" value="ECO:0000270"/>
    <property type="project" value="TAIR"/>
</dbReference>
<dbReference type="GO" id="GO:0042023">
    <property type="term" value="P:DNA endoreduplication"/>
    <property type="evidence" value="ECO:0000304"/>
    <property type="project" value="TAIR"/>
</dbReference>
<dbReference type="GO" id="GO:0010444">
    <property type="term" value="P:guard mother cell differentiation"/>
    <property type="evidence" value="ECO:0000315"/>
    <property type="project" value="UniProtKB"/>
</dbReference>
<dbReference type="GO" id="GO:1902806">
    <property type="term" value="P:regulation of cell cycle G1/S phase transition"/>
    <property type="evidence" value="ECO:0000315"/>
    <property type="project" value="UniProtKB"/>
</dbReference>
<dbReference type="GO" id="GO:0032875">
    <property type="term" value="P:regulation of DNA endoreduplication"/>
    <property type="evidence" value="ECO:0000315"/>
    <property type="project" value="UniProtKB"/>
</dbReference>
<dbReference type="GO" id="GO:2000037">
    <property type="term" value="P:regulation of stomatal complex patterning"/>
    <property type="evidence" value="ECO:0000315"/>
    <property type="project" value="UniProtKB"/>
</dbReference>
<dbReference type="GO" id="GO:0010376">
    <property type="term" value="P:stomatal complex formation"/>
    <property type="evidence" value="ECO:0000270"/>
    <property type="project" value="UniProtKB"/>
</dbReference>
<dbReference type="GO" id="GO:0009826">
    <property type="term" value="P:unidimensional cell growth"/>
    <property type="evidence" value="ECO:0000315"/>
    <property type="project" value="TAIR"/>
</dbReference>
<dbReference type="FunFam" id="1.10.510.10:FF:000281">
    <property type="entry name" value="Cyclin-dependent kinase 2"/>
    <property type="match status" value="1"/>
</dbReference>
<dbReference type="FunFam" id="3.30.200.20:FF:000231">
    <property type="entry name" value="Cyclin-dependent kinase B2,2"/>
    <property type="match status" value="1"/>
</dbReference>
<dbReference type="Gene3D" id="3.30.200.20">
    <property type="entry name" value="Phosphorylase Kinase, domain 1"/>
    <property type="match status" value="1"/>
</dbReference>
<dbReference type="Gene3D" id="1.10.510.10">
    <property type="entry name" value="Transferase(Phosphotransferase) domain 1"/>
    <property type="match status" value="1"/>
</dbReference>
<dbReference type="InterPro" id="IPR050108">
    <property type="entry name" value="CDK"/>
</dbReference>
<dbReference type="InterPro" id="IPR011009">
    <property type="entry name" value="Kinase-like_dom_sf"/>
</dbReference>
<dbReference type="InterPro" id="IPR000719">
    <property type="entry name" value="Prot_kinase_dom"/>
</dbReference>
<dbReference type="InterPro" id="IPR017441">
    <property type="entry name" value="Protein_kinase_ATP_BS"/>
</dbReference>
<dbReference type="InterPro" id="IPR008271">
    <property type="entry name" value="Ser/Thr_kinase_AS"/>
</dbReference>
<dbReference type="PANTHER" id="PTHR24056">
    <property type="entry name" value="CELL DIVISION PROTEIN KINASE"/>
    <property type="match status" value="1"/>
</dbReference>
<dbReference type="PANTHER" id="PTHR24056:SF539">
    <property type="entry name" value="CYCLIN-DEPENDENT KINASE B1-1"/>
    <property type="match status" value="1"/>
</dbReference>
<dbReference type="Pfam" id="PF00069">
    <property type="entry name" value="Pkinase"/>
    <property type="match status" value="1"/>
</dbReference>
<dbReference type="SMART" id="SM00220">
    <property type="entry name" value="S_TKc"/>
    <property type="match status" value="1"/>
</dbReference>
<dbReference type="SUPFAM" id="SSF56112">
    <property type="entry name" value="Protein kinase-like (PK-like)"/>
    <property type="match status" value="1"/>
</dbReference>
<dbReference type="PROSITE" id="PS00107">
    <property type="entry name" value="PROTEIN_KINASE_ATP"/>
    <property type="match status" value="1"/>
</dbReference>
<dbReference type="PROSITE" id="PS50011">
    <property type="entry name" value="PROTEIN_KINASE_DOM"/>
    <property type="match status" value="1"/>
</dbReference>
<dbReference type="PROSITE" id="PS00108">
    <property type="entry name" value="PROTEIN_KINASE_ST"/>
    <property type="match status" value="1"/>
</dbReference>
<evidence type="ECO:0000250" key="1"/>
<evidence type="ECO:0000250" key="2">
    <source>
        <dbReference type="UniProtKB" id="P24100"/>
    </source>
</evidence>
<evidence type="ECO:0000250" key="3">
    <source>
        <dbReference type="UniProtKB" id="Q9C9M7"/>
    </source>
</evidence>
<evidence type="ECO:0000255" key="4">
    <source>
        <dbReference type="PROSITE-ProRule" id="PRU00159"/>
    </source>
</evidence>
<evidence type="ECO:0000255" key="5">
    <source>
        <dbReference type="PROSITE-ProRule" id="PRU10027"/>
    </source>
</evidence>
<evidence type="ECO:0000269" key="6">
    <source>
    </source>
</evidence>
<evidence type="ECO:0000269" key="7">
    <source>
    </source>
</evidence>
<evidence type="ECO:0000269" key="8">
    <source>
    </source>
</evidence>
<evidence type="ECO:0000269" key="9">
    <source>
    </source>
</evidence>
<evidence type="ECO:0000269" key="10">
    <source>
    </source>
</evidence>
<evidence type="ECO:0000269" key="11">
    <source>
    </source>
</evidence>
<evidence type="ECO:0000269" key="12">
    <source>
    </source>
</evidence>
<evidence type="ECO:0000269" key="13">
    <source>
    </source>
</evidence>
<evidence type="ECO:0000269" key="14">
    <source>
    </source>
</evidence>
<evidence type="ECO:0000269" key="15">
    <source>
    </source>
</evidence>
<evidence type="ECO:0000269" key="16">
    <source>
    </source>
</evidence>
<evidence type="ECO:0000269" key="17">
    <source>
    </source>
</evidence>
<evidence type="ECO:0000269" key="18">
    <source>
    </source>
</evidence>
<evidence type="ECO:0000305" key="19"/>
<proteinExistence type="evidence at protein level"/>
<feature type="chain" id="PRO_0000085750" description="Cyclin-dependent kinase B1-1">
    <location>
        <begin position="1"/>
        <end position="309"/>
    </location>
</feature>
<feature type="domain" description="Protein kinase" evidence="4">
    <location>
        <begin position="4"/>
        <end position="301"/>
    </location>
</feature>
<feature type="active site" description="Proton acceptor" evidence="4 5">
    <location>
        <position position="142"/>
    </location>
</feature>
<feature type="binding site" evidence="4">
    <location>
        <begin position="10"/>
        <end position="18"/>
    </location>
    <ligand>
        <name>ATP</name>
        <dbReference type="ChEBI" id="CHEBI:30616"/>
    </ligand>
</feature>
<feature type="binding site" evidence="4">
    <location>
        <position position="33"/>
    </location>
    <ligand>
        <name>ATP</name>
        <dbReference type="ChEBI" id="CHEBI:30616"/>
    </ligand>
</feature>
<feature type="modified residue" description="Phosphotyrosine" evidence="2">
    <location>
        <position position="15"/>
    </location>
</feature>
<feature type="modified residue" description="Phosphothreonine; by CAK" evidence="3">
    <location>
        <position position="176"/>
    </location>
</feature>
<feature type="mutagenesis site" description="Decreased kinase activity and disturbed cell cycle; when associated with F-15." evidence="6">
    <original>T</original>
    <variation>A</variation>
    <location>
        <position position="14"/>
    </location>
</feature>
<feature type="mutagenesis site" description="Decreased kinase activity and disturbed cell cycle; when associated with A-14." evidence="6">
    <original>Y</original>
    <variation>F</variation>
    <location>
        <position position="15"/>
    </location>
</feature>
<feature type="mutagenesis site" description="Dominant negative. Decreased kinase activity and disturbed cell cycle." evidence="6 10 11">
    <original>D</original>
    <variation>N</variation>
    <location>
        <position position="161"/>
    </location>
</feature>
<feature type="mutagenesis site" description="Decreased kinase activity and disturbed cell cycle." evidence="6">
    <original>P</original>
    <variation>L</variation>
    <location>
        <position position="171"/>
    </location>
</feature>
<feature type="mutagenesis site" description="Decreased kinase activity and disturbed cell cycle." evidence="6">
    <original>T</original>
    <variation>I</variation>
    <location>
        <position position="181"/>
    </location>
</feature>
<feature type="mutagenesis site" description="Decreased kinase activity and disturbed cell cycle." evidence="6">
    <location>
        <begin position="249"/>
        <end position="251"/>
    </location>
</feature>
<feature type="sequence conflict" description="In Ref. 6; CAA40972." evidence="19" ref="6">
    <original>Q</original>
    <variation>R</variation>
    <location>
        <position position="226"/>
    </location>
</feature>
<name>CKB11_ARATH</name>
<comment type="function">
    <text evidence="7 9 10 11 13 14 15 16">May control G2/M (mitosis) phase progression. Plays a role in regulating seedling growth in darkness via regulation of hypocotyl cell elongation and cotyledon cell development. Plays a role in stomatal development. Required to suppress endoreduplication. Together with CDKB1-2, promotes both the last division in the stomatal cell lineage as well as the number of stomata (PubMed:20675570). In collaboration with MYB124 and MYB88, restrict the G1/S transition and chloroplast and nuclear number during stomatal formation, and normally maintain fate and developmental progression throughout the stomatal cell lineage (PubMed:24123248, PubMed:24687979).</text>
</comment>
<comment type="catalytic activity">
    <reaction>
        <text>L-seryl-[protein] + ATP = O-phospho-L-seryl-[protein] + ADP + H(+)</text>
        <dbReference type="Rhea" id="RHEA:17989"/>
        <dbReference type="Rhea" id="RHEA-COMP:9863"/>
        <dbReference type="Rhea" id="RHEA-COMP:11604"/>
        <dbReference type="ChEBI" id="CHEBI:15378"/>
        <dbReference type="ChEBI" id="CHEBI:29999"/>
        <dbReference type="ChEBI" id="CHEBI:30616"/>
        <dbReference type="ChEBI" id="CHEBI:83421"/>
        <dbReference type="ChEBI" id="CHEBI:456216"/>
        <dbReference type="EC" id="2.7.11.22"/>
    </reaction>
</comment>
<comment type="catalytic activity">
    <reaction>
        <text>L-threonyl-[protein] + ATP = O-phospho-L-threonyl-[protein] + ADP + H(+)</text>
        <dbReference type="Rhea" id="RHEA:46608"/>
        <dbReference type="Rhea" id="RHEA-COMP:11060"/>
        <dbReference type="Rhea" id="RHEA-COMP:11605"/>
        <dbReference type="ChEBI" id="CHEBI:15378"/>
        <dbReference type="ChEBI" id="CHEBI:30013"/>
        <dbReference type="ChEBI" id="CHEBI:30616"/>
        <dbReference type="ChEBI" id="CHEBI:61977"/>
        <dbReference type="ChEBI" id="CHEBI:456216"/>
        <dbReference type="EC" id="2.7.11.22"/>
    </reaction>
</comment>
<comment type="catalytic activity">
    <reaction>
        <text>[DNA-directed RNA polymerase] + ATP = phospho-[DNA-directed RNA polymerase] + ADP + H(+)</text>
        <dbReference type="Rhea" id="RHEA:10216"/>
        <dbReference type="Rhea" id="RHEA-COMP:11321"/>
        <dbReference type="Rhea" id="RHEA-COMP:11322"/>
        <dbReference type="ChEBI" id="CHEBI:15378"/>
        <dbReference type="ChEBI" id="CHEBI:30616"/>
        <dbReference type="ChEBI" id="CHEBI:43176"/>
        <dbReference type="ChEBI" id="CHEBI:68546"/>
        <dbReference type="ChEBI" id="CHEBI:456216"/>
        <dbReference type="EC" id="2.7.11.23"/>
    </reaction>
</comment>
<comment type="activity regulation">
    <text evidence="1">Phosphorylation at Thr-14 or Tyr-15 inactivates the enzyme, while phosphorylation at Thr-176 activates it.</text>
</comment>
<comment type="subunit">
    <text evidence="8 12 18">Interacts with CKS1 (PubMed:11319029, PubMed:9276444). Interacts with CYCU3-1 (PubMed:15197472). Interacts with SIM, SMR1 and SMR2 (PubMed:20706207).</text>
</comment>
<comment type="interaction">
    <interactant intactId="EBI-1253311">
        <id>P25859</id>
    </interactant>
    <interactant intactId="EBI-1253127">
        <id>O23249</id>
        <label>CKS1</label>
    </interactant>
    <organismsDiffer>false</organismsDiffer>
    <experiments>7</experiments>
</comment>
<comment type="subcellular location">
    <subcellularLocation>
        <location evidence="14">Nucleus</location>
    </subcellularLocation>
</comment>
<comment type="tissue specificity">
    <text evidence="11 17">Highly expressed in guard cells and stomatal precursor cells of cotyledons. Expressed in roots, stems, flowers and siliques.</text>
</comment>
<comment type="developmental stage">
    <text evidence="7 10 14 17">Preferentially expressed in the S and G2 phases. Expressed in actively dividing cells: root and shoot apical meristems, leaf primordia and emerging lateral root meristem. Expressed in light-grown seedlings from 1 up to 7 days after germination with a peak at 2 and 3 days. Observed in late guard mother cells (GMC), newly formed guard cells, and immature stomata, thus being expressed just before and after the symmetric division of stomatal differentiation (PubMed:20675570).</text>
</comment>
<comment type="induction">
    <text evidence="14">Repressed by MYB88 and MYB124 during stomatal development.</text>
</comment>
<comment type="disruption phenotype">
    <text evidence="14 15 16">No apparent stomatal abnormalities. The double mutant cdkb1;1 cdkb1;2 has a reduced number of abnormal stomata consisting in single guard cells (GC) (PubMed:20675570, PubMed:24123248, PubMed:24687979). CDKA-1 partially rescue abnormal stomata phenotype of cdkb1;1 cdkb1;2 (PubMed:24687979). The quadruple mutant flp-1 myb88 cdkb1;1 cdkb1;2 has a reduced number of large single guard cells blocked at mitosis, with strongly altered shape and size and characterized by enlarged nucleus due to endomitosis and endocycling, as well as extensive chloroplast replication (PubMed:24123248).</text>
</comment>
<comment type="similarity">
    <text evidence="19">Belongs to the protein kinase superfamily. CMGC Ser/Thr protein kinase family. CDC2/CDKX subfamily.</text>
</comment>
<reference key="1">
    <citation type="journal article" date="1992" name="FEBS Lett.">
        <title>Exon-intron organization of the Arabidopsis thaliana protein kinase genes CDC2a and CDC2b.</title>
        <authorList>
            <person name="Imajuku Y."/>
            <person name="Hirayama T."/>
            <person name="Endoh H."/>
            <person name="Oka A."/>
        </authorList>
    </citation>
    <scope>NUCLEOTIDE SEQUENCE [GENOMIC DNA]</scope>
    <source>
        <strain>cv. Columbia</strain>
    </source>
</reference>
<reference key="2">
    <citation type="journal article" date="2000" name="Nature">
        <title>Sequence and analysis of chromosome 3 of the plant Arabidopsis thaliana.</title>
        <authorList>
            <person name="Salanoubat M."/>
            <person name="Lemcke K."/>
            <person name="Rieger M."/>
            <person name="Ansorge W."/>
            <person name="Unseld M."/>
            <person name="Fartmann B."/>
            <person name="Valle G."/>
            <person name="Bloecker H."/>
            <person name="Perez-Alonso M."/>
            <person name="Obermaier B."/>
            <person name="Delseny M."/>
            <person name="Boutry M."/>
            <person name="Grivell L.A."/>
            <person name="Mache R."/>
            <person name="Puigdomenech P."/>
            <person name="De Simone V."/>
            <person name="Choisne N."/>
            <person name="Artiguenave F."/>
            <person name="Robert C."/>
            <person name="Brottier P."/>
            <person name="Wincker P."/>
            <person name="Cattolico L."/>
            <person name="Weissenbach J."/>
            <person name="Saurin W."/>
            <person name="Quetier F."/>
            <person name="Schaefer M."/>
            <person name="Mueller-Auer S."/>
            <person name="Gabel C."/>
            <person name="Fuchs M."/>
            <person name="Benes V."/>
            <person name="Wurmbach E."/>
            <person name="Drzonek H."/>
            <person name="Erfle H."/>
            <person name="Jordan N."/>
            <person name="Bangert S."/>
            <person name="Wiedelmann R."/>
            <person name="Kranz H."/>
            <person name="Voss H."/>
            <person name="Holland R."/>
            <person name="Brandt P."/>
            <person name="Nyakatura G."/>
            <person name="Vezzi A."/>
            <person name="D'Angelo M."/>
            <person name="Pallavicini A."/>
            <person name="Toppo S."/>
            <person name="Simionati B."/>
            <person name="Conrad A."/>
            <person name="Hornischer K."/>
            <person name="Kauer G."/>
            <person name="Loehnert T.-H."/>
            <person name="Nordsiek G."/>
            <person name="Reichelt J."/>
            <person name="Scharfe M."/>
            <person name="Schoen O."/>
            <person name="Bargues M."/>
            <person name="Terol J."/>
            <person name="Climent J."/>
            <person name="Navarro P."/>
            <person name="Collado C."/>
            <person name="Perez-Perez A."/>
            <person name="Ottenwaelder B."/>
            <person name="Duchemin D."/>
            <person name="Cooke R."/>
            <person name="Laudie M."/>
            <person name="Berger-Llauro C."/>
            <person name="Purnelle B."/>
            <person name="Masuy D."/>
            <person name="de Haan M."/>
            <person name="Maarse A.C."/>
            <person name="Alcaraz J.-P."/>
            <person name="Cottet A."/>
            <person name="Casacuberta E."/>
            <person name="Monfort A."/>
            <person name="Argiriou A."/>
            <person name="Flores M."/>
            <person name="Liguori R."/>
            <person name="Vitale D."/>
            <person name="Mannhaupt G."/>
            <person name="Haase D."/>
            <person name="Schoof H."/>
            <person name="Rudd S."/>
            <person name="Zaccaria P."/>
            <person name="Mewes H.-W."/>
            <person name="Mayer K.F.X."/>
            <person name="Kaul S."/>
            <person name="Town C.D."/>
            <person name="Koo H.L."/>
            <person name="Tallon L.J."/>
            <person name="Jenkins J."/>
            <person name="Rooney T."/>
            <person name="Rizzo M."/>
            <person name="Walts A."/>
            <person name="Utterback T."/>
            <person name="Fujii C.Y."/>
            <person name="Shea T.P."/>
            <person name="Creasy T.H."/>
            <person name="Haas B."/>
            <person name="Maiti R."/>
            <person name="Wu D."/>
            <person name="Peterson J."/>
            <person name="Van Aken S."/>
            <person name="Pai G."/>
            <person name="Militscher J."/>
            <person name="Sellers P."/>
            <person name="Gill J.E."/>
            <person name="Feldblyum T.V."/>
            <person name="Preuss D."/>
            <person name="Lin X."/>
            <person name="Nierman W.C."/>
            <person name="Salzberg S.L."/>
            <person name="White O."/>
            <person name="Venter J.C."/>
            <person name="Fraser C.M."/>
            <person name="Kaneko T."/>
            <person name="Nakamura Y."/>
            <person name="Sato S."/>
            <person name="Kato T."/>
            <person name="Asamizu E."/>
            <person name="Sasamoto S."/>
            <person name="Kimura T."/>
            <person name="Idesawa K."/>
            <person name="Kawashima K."/>
            <person name="Kishida Y."/>
            <person name="Kiyokawa C."/>
            <person name="Kohara M."/>
            <person name="Matsumoto M."/>
            <person name="Matsuno A."/>
            <person name="Muraki A."/>
            <person name="Nakayama S."/>
            <person name="Nakazaki N."/>
            <person name="Shinpo S."/>
            <person name="Takeuchi C."/>
            <person name="Wada T."/>
            <person name="Watanabe A."/>
            <person name="Yamada M."/>
            <person name="Yasuda M."/>
            <person name="Tabata S."/>
        </authorList>
    </citation>
    <scope>NUCLEOTIDE SEQUENCE [LARGE SCALE GENOMIC DNA]</scope>
    <source>
        <strain>cv. Columbia</strain>
    </source>
</reference>
<reference key="3">
    <citation type="journal article" date="2017" name="Plant J.">
        <title>Araport11: a complete reannotation of the Arabidopsis thaliana reference genome.</title>
        <authorList>
            <person name="Cheng C.Y."/>
            <person name="Krishnakumar V."/>
            <person name="Chan A.P."/>
            <person name="Thibaud-Nissen F."/>
            <person name="Schobel S."/>
            <person name="Town C.D."/>
        </authorList>
    </citation>
    <scope>GENOME REANNOTATION</scope>
    <source>
        <strain>cv. Columbia</strain>
    </source>
</reference>
<reference key="4">
    <citation type="submission" date="2006-07" db="EMBL/GenBank/DDBJ databases">
        <title>Arabidopsis ORF clones.</title>
        <authorList>
            <person name="Quinitio C."/>
            <person name="Chen H."/>
            <person name="Kim C.J."/>
            <person name="Shinn P."/>
            <person name="Ecker J.R."/>
        </authorList>
    </citation>
    <scope>NUCLEOTIDE SEQUENCE [LARGE SCALE MRNA]</scope>
    <source>
        <strain>cv. Columbia</strain>
    </source>
</reference>
<reference key="5">
    <citation type="submission" date="2002-03" db="EMBL/GenBank/DDBJ databases">
        <title>Full-length cDNA from Arabidopsis thaliana.</title>
        <authorList>
            <person name="Brover V.V."/>
            <person name="Troukhan M.E."/>
            <person name="Alexandrov N.A."/>
            <person name="Lu Y.-P."/>
            <person name="Flavell R.B."/>
            <person name="Feldmann K.A."/>
        </authorList>
    </citation>
    <scope>NUCLEOTIDE SEQUENCE [LARGE SCALE MRNA]</scope>
</reference>
<reference key="6">
    <citation type="journal article" date="1991" name="Gene">
        <title>Identification of two cell-cycle-controlling cdc2 gene homologs in Arabidopsis thaliana.</title>
        <authorList>
            <person name="Hirayama T."/>
            <person name="Imajuku Y."/>
            <person name="Anai T."/>
            <person name="Matsui M."/>
            <person name="Oka A."/>
        </authorList>
    </citation>
    <scope>NUCLEOTIDE SEQUENCE [MRNA] OF 140-309</scope>
    <source>
        <strain>cv. Columbia</strain>
    </source>
</reference>
<reference key="7">
    <citation type="journal article" date="1996" name="Plant J.">
        <title>The Arabidopsis cyclin-dependent kinase gene cdc2bAt is preferentially expressed during S and G2 phases of the cell cycle.</title>
        <authorList>
            <person name="Segers G."/>
            <person name="Gadisseur I."/>
            <person name="Bergounioux C."/>
            <person name="de Almeida Engler J."/>
            <person name="Jacqmard A."/>
            <person name="van Montagu M."/>
            <person name="Inze D."/>
        </authorList>
    </citation>
    <scope>TISSUE SPECIFICITY</scope>
    <scope>DEVELOPMENTAL STAGE</scope>
</reference>
<reference key="8">
    <citation type="journal article" date="1997" name="FEBS Lett.">
        <title>The Arabidopsis Cks1At protein binds the cyclin-dependent kinases Cdc2aAt and Cdc2bAt.</title>
        <authorList>
            <person name="de Veylder L."/>
            <person name="Segers G."/>
            <person name="Glab N."/>
            <person name="Casteels P."/>
            <person name="van Montagu M."/>
            <person name="Inze D."/>
        </authorList>
    </citation>
    <scope>INTERACTION WITH CKS1</scope>
</reference>
<reference key="9">
    <citation type="journal article" date="1999" name="FEBS Lett.">
        <title>Mutational analysis of two Arabidopsis thaliana cyclin-dependent kinases in fission yeast.</title>
        <authorList>
            <person name="Porceddu A."/>
            <person name="de Veylder L."/>
            <person name="Hayles J."/>
            <person name="van Montagu M."/>
            <person name="Inze D."/>
            <person name="Mironov V."/>
        </authorList>
    </citation>
    <scope>MUTAGENESIS OF THR-14; TYR-15; ASP-161; PRO-171; THR-181 AND 249-LEU--ASP-251</scope>
</reference>
<reference key="10">
    <citation type="journal article" date="1999" name="Plant Cell">
        <title>An Arabidopsis cell cycle-dependent kinase-related gene, CDC2b, plays a role in regulating seedling growth in darkness.</title>
        <authorList>
            <person name="Yoshizumi T."/>
            <person name="Nagata N."/>
            <person name="Shimada H."/>
            <person name="Matsui M."/>
        </authorList>
    </citation>
    <scope>FUNCTION</scope>
    <scope>DEVELOPMENTAL STAGE</scope>
</reference>
<reference key="11">
    <citation type="journal article" date="2001" name="Plant Mol. Biol.">
        <title>An upstream region of the Arabidopsis thaliana CDKA;1 (CDC2aAt) gene directs transcription during trichome development.</title>
        <authorList>
            <person name="Imajuku Y."/>
            <person name="Ohashi Y."/>
            <person name="Aoyama T."/>
            <person name="Goto K."/>
            <person name="Oka A."/>
        </authorList>
    </citation>
    <scope>FUNCTION</scope>
</reference>
<reference key="12">
    <citation type="journal article" date="2001" name="J. Biol. Chem.">
        <title>A plant-specific cyclin-dependent kinase is involved in the control of G2/M progression in plants.</title>
        <authorList>
            <person name="Porceddu A."/>
            <person name="Stals H."/>
            <person name="Reichheld J.-P."/>
            <person name="Segers G."/>
            <person name="de Veylder L."/>
            <person name="Barroco R.M."/>
            <person name="Casteels P."/>
            <person name="van Montagu M."/>
            <person name="Inze D."/>
            <person name="Mironov V."/>
        </authorList>
    </citation>
    <scope>FUNCTION</scope>
    <scope>DEVELOPMENTAL STAGE</scope>
    <scope>MUTAGENESIS OF ASP-161</scope>
</reference>
<reference key="13">
    <citation type="journal article" date="2001" name="Plant J.">
        <title>CKS1At overexpression in Arabidopsis thaliana inhibits growth by reducing meristem size and inhibiting cell-cycle progression.</title>
        <authorList>
            <person name="de Veylder L."/>
            <person name="Beemster G.T.S."/>
            <person name="Beeckman T."/>
            <person name="Inze D."/>
        </authorList>
    </citation>
    <scope>INTERACTION WITH CKS1</scope>
</reference>
<reference key="14">
    <citation type="journal article" date="2002" name="Plant Cell">
        <title>Genome-wide analysis of core cell cycle genes in Arabidopsis.</title>
        <authorList>
            <person name="Vandepoele K."/>
            <person name="Raes J."/>
            <person name="de Veylder L."/>
            <person name="Rouze P."/>
            <person name="Rombauts S."/>
            <person name="Inze D."/>
        </authorList>
    </citation>
    <scope>GENE FAMILY</scope>
    <scope>NOMENCLATURE</scope>
</reference>
<reference key="15">
    <citation type="journal article" date="2004" name="Cell. Mol. Life Sci.">
        <title>Molecular characterization of Arabidopsis PHO80-like proteins, a novel class of CDKA;1-interacting cyclins.</title>
        <authorList>
            <person name="Torres Acosta J.A."/>
            <person name="de Almeida Engler J."/>
            <person name="Raes J."/>
            <person name="Magyar Z."/>
            <person name="de Groodt R."/>
            <person name="Inze D."/>
            <person name="de Veylder L."/>
        </authorList>
    </citation>
    <scope>INTERACTION WITH CYCU3-1</scope>
</reference>
<reference key="16">
    <citation type="journal article" date="2004" name="Plant Cell">
        <title>B1-type cyclin-dependent kinases are essential for the formation of stomatal complexes in Arabidopsis thaliana.</title>
        <authorList>
            <person name="Boudolf V."/>
            <person name="Barroco R.M."/>
            <person name="de Almeida Engler J."/>
            <person name="Verkest A."/>
            <person name="Beeckman T."/>
            <person name="Naudts M."/>
            <person name="Inze D."/>
            <person name="de Veylder L."/>
        </authorList>
    </citation>
    <scope>FUNCTION</scope>
    <scope>TISSUE SPECIFICITY</scope>
    <scope>MUTAGENESIS OF ASP-161</scope>
</reference>
<reference key="17">
    <citation type="journal article" date="2004" name="Plant Cell">
        <title>The plant-specific cyclin-dependent kinase CDKB1;1 and transcription factor E2Fa-DPa control the balance of mitotically dividing and endoreduplicating cells in Arabidopsis.</title>
        <authorList>
            <person name="Boudolf V."/>
            <person name="Vlieghe K."/>
            <person name="Beemster G.T.S."/>
            <person name="Magyar Z."/>
            <person name="Torres Acosta J.A."/>
            <person name="Maes S."/>
            <person name="Van Der Schueren E."/>
            <person name="Inze D."/>
            <person name="De Veylder L."/>
        </authorList>
    </citation>
    <scope>FUNCTION</scope>
</reference>
<reference key="18">
    <citation type="journal article" date="2006" name="Annu. Rev. Genet.">
        <title>Cell cycle regulation in plant development.</title>
        <authorList>
            <person name="Inze D."/>
            <person name="de Veylder L."/>
        </authorList>
    </citation>
    <scope>REVIEW</scope>
</reference>
<reference key="19">
    <citation type="journal article" date="2010" name="Mol. Syst. Biol.">
        <title>Targeted interactomics reveals a complex core cell cycle machinery in Arabidopsis thaliana.</title>
        <authorList>
            <person name="Van Leene J."/>
            <person name="Hollunder J."/>
            <person name="Eeckhout D."/>
            <person name="Persiau G."/>
            <person name="Van De Slijke E."/>
            <person name="Stals H."/>
            <person name="Van Isterdael G."/>
            <person name="Verkest A."/>
            <person name="Neirynck S."/>
            <person name="Buffel Y."/>
            <person name="De Bodt S."/>
            <person name="Maere S."/>
            <person name="Laukens K."/>
            <person name="Pharazyn A."/>
            <person name="Ferreira P.C.G."/>
            <person name="Eloy N."/>
            <person name="Renne C."/>
            <person name="Meyer C."/>
            <person name="Faure J.-D."/>
            <person name="Steinbrenner J."/>
            <person name="Beynon J."/>
            <person name="Larkin J.C."/>
            <person name="Van de Peer Y."/>
            <person name="Hilson P."/>
            <person name="Kuiper M."/>
            <person name="De Veylder L."/>
            <person name="Van Onckelen H."/>
            <person name="Inze D."/>
            <person name="Witters E."/>
            <person name="De Jaeger G."/>
        </authorList>
    </citation>
    <scope>INTERACTION WITH SIM; SMR1 AND SMR2</scope>
</reference>
<reference key="20">
    <citation type="journal article" date="2010" name="Plant Cell">
        <title>Regulation of cell proliferation in the stomatal lineage by the Arabidopsis MYB FOUR LIPS via direct targeting of core cell cycle genes.</title>
        <authorList>
            <person name="Xie Z."/>
            <person name="Lee E."/>
            <person name="Lucas J.R."/>
            <person name="Morohashi K."/>
            <person name="Li D."/>
            <person name="Murray J.A."/>
            <person name="Sack F.D."/>
            <person name="Grotewold E."/>
        </authorList>
    </citation>
    <scope>FUNCTION</scope>
    <scope>DISRUPTION PHENOTYPE</scope>
    <scope>DEVELOPMENTAL STAGE</scope>
    <scope>SUBCELLULAR LOCATION</scope>
    <scope>REGULATION BY MYB88 AND MYB124</scope>
    <source>
        <strain>cv. Columbia</strain>
    </source>
</reference>
<reference key="21">
    <citation type="journal article" date="2013" name="J. Exp. Bot.">
        <title>FOUR LIPS and MYB88 conditionally restrict the G1/S transition during stomatal formation.</title>
        <authorList>
            <person name="Lee E."/>
            <person name="Liu X."/>
            <person name="Eglit Y."/>
            <person name="Sack F."/>
        </authorList>
    </citation>
    <scope>FUNCTION</scope>
    <scope>DISRUPTION PHENOTYPE</scope>
    <source>
        <strain>cv. Columbia</strain>
    </source>
</reference>
<reference key="22">
    <citation type="journal article" date="2014" name="J. Exp. Bot.">
        <title>Requirement for A-type cyclin-dependent kinase and cyclins for the terminal division in the stomatal lineage of Arabidopsis.</title>
        <authorList>
            <person name="Yang K."/>
            <person name="Wang H."/>
            <person name="Xue S."/>
            <person name="Qu X."/>
            <person name="Zou J."/>
            <person name="Le J."/>
        </authorList>
    </citation>
    <scope>FUNCTION</scope>
    <scope>DISRUPTION PHENOTYPE</scope>
    <source>
        <strain>cv. Columbia</strain>
    </source>
</reference>
<accession>P25859</accession>
<accession>Q147L4</accession>
<keyword id="KW-0067">ATP-binding</keyword>
<keyword id="KW-0131">Cell cycle</keyword>
<keyword id="KW-0132">Cell division</keyword>
<keyword id="KW-0418">Kinase</keyword>
<keyword id="KW-0498">Mitosis</keyword>
<keyword id="KW-0547">Nucleotide-binding</keyword>
<keyword id="KW-0539">Nucleus</keyword>
<keyword id="KW-0597">Phosphoprotein</keyword>
<keyword id="KW-1185">Reference proteome</keyword>
<keyword id="KW-0723">Serine/threonine-protein kinase</keyword>
<keyword id="KW-0808">Transferase</keyword>
<organism>
    <name type="scientific">Arabidopsis thaliana</name>
    <name type="common">Mouse-ear cress</name>
    <dbReference type="NCBI Taxonomy" id="3702"/>
    <lineage>
        <taxon>Eukaryota</taxon>
        <taxon>Viridiplantae</taxon>
        <taxon>Streptophyta</taxon>
        <taxon>Embryophyta</taxon>
        <taxon>Tracheophyta</taxon>
        <taxon>Spermatophyta</taxon>
        <taxon>Magnoliopsida</taxon>
        <taxon>eudicotyledons</taxon>
        <taxon>Gunneridae</taxon>
        <taxon>Pentapetalae</taxon>
        <taxon>rosids</taxon>
        <taxon>malvids</taxon>
        <taxon>Brassicales</taxon>
        <taxon>Brassicaceae</taxon>
        <taxon>Camelineae</taxon>
        <taxon>Arabidopsis</taxon>
    </lineage>
</organism>
<protein>
    <recommendedName>
        <fullName>Cyclin-dependent kinase B1-1</fullName>
        <shortName>CDKB1;1</shortName>
        <ecNumber>2.7.11.22</ecNumber>
        <ecNumber>2.7.11.23</ecNumber>
    </recommendedName>
    <alternativeName>
        <fullName>Cell division control protein 2 homolog B</fullName>
    </alternativeName>
</protein>
<sequence length="309" mass="35318">MEKYEKLEKVGEGTYGKVYKAMEKGTGKLVALKKTRLEMDEEGIPPTALREISLLQMLSTSIYVVRLLCVEHVHQPSTKSQSTKSNLYLVFEYLDTDLKKFIDSYRKGPNPKPLEPFLIQKLMFQLCKGVAHCHSHGVLHRDLKPQNLLLVKDKELLKIADLGLGRAFTVPLKSYTHEIVTLWYRAPEVLLGSTHYSTGVDMWSVGCIFAEMVRRQALFPGDSEFQQLLHIFRLLGTPTEQQWPGVSTLRDWHVYPKWEPQDLTLAVPSLSPQGVDLLTKMLKYNPAERISAKTALDHPYFDSLDKSQF</sequence>